<proteinExistence type="inferred from homology"/>
<organism>
    <name type="scientific">Bacillus anthracis (strain A0248)</name>
    <dbReference type="NCBI Taxonomy" id="592021"/>
    <lineage>
        <taxon>Bacteria</taxon>
        <taxon>Bacillati</taxon>
        <taxon>Bacillota</taxon>
        <taxon>Bacilli</taxon>
        <taxon>Bacillales</taxon>
        <taxon>Bacillaceae</taxon>
        <taxon>Bacillus</taxon>
        <taxon>Bacillus cereus group</taxon>
    </lineage>
</organism>
<gene>
    <name evidence="1" type="primary">rimM</name>
    <name type="ordered locus">BAA_4004</name>
</gene>
<keyword id="KW-0143">Chaperone</keyword>
<keyword id="KW-0963">Cytoplasm</keyword>
<keyword id="KW-0690">Ribosome biogenesis</keyword>
<keyword id="KW-0698">rRNA processing</keyword>
<dbReference type="EMBL" id="CP001598">
    <property type="protein sequence ID" value="ACQ46109.1"/>
    <property type="molecule type" value="Genomic_DNA"/>
</dbReference>
<dbReference type="RefSeq" id="WP_000170269.1">
    <property type="nucleotide sequence ID" value="NC_012659.1"/>
</dbReference>
<dbReference type="SMR" id="C3P5P3"/>
<dbReference type="GeneID" id="45023670"/>
<dbReference type="KEGG" id="bai:BAA_4004"/>
<dbReference type="HOGENOM" id="CLU_077636_3_1_9"/>
<dbReference type="GO" id="GO:0005737">
    <property type="term" value="C:cytoplasm"/>
    <property type="evidence" value="ECO:0007669"/>
    <property type="project" value="UniProtKB-SubCell"/>
</dbReference>
<dbReference type="GO" id="GO:0005840">
    <property type="term" value="C:ribosome"/>
    <property type="evidence" value="ECO:0007669"/>
    <property type="project" value="InterPro"/>
</dbReference>
<dbReference type="GO" id="GO:0043022">
    <property type="term" value="F:ribosome binding"/>
    <property type="evidence" value="ECO:0007669"/>
    <property type="project" value="InterPro"/>
</dbReference>
<dbReference type="GO" id="GO:0042274">
    <property type="term" value="P:ribosomal small subunit biogenesis"/>
    <property type="evidence" value="ECO:0007669"/>
    <property type="project" value="UniProtKB-UniRule"/>
</dbReference>
<dbReference type="GO" id="GO:0006364">
    <property type="term" value="P:rRNA processing"/>
    <property type="evidence" value="ECO:0007669"/>
    <property type="project" value="UniProtKB-UniRule"/>
</dbReference>
<dbReference type="Gene3D" id="2.30.30.240">
    <property type="entry name" value="PRC-barrel domain"/>
    <property type="match status" value="1"/>
</dbReference>
<dbReference type="Gene3D" id="2.40.30.60">
    <property type="entry name" value="RimM"/>
    <property type="match status" value="1"/>
</dbReference>
<dbReference type="HAMAP" id="MF_00014">
    <property type="entry name" value="Ribosome_mat_RimM"/>
    <property type="match status" value="1"/>
</dbReference>
<dbReference type="InterPro" id="IPR027275">
    <property type="entry name" value="PRC-brl_dom"/>
</dbReference>
<dbReference type="InterPro" id="IPR011033">
    <property type="entry name" value="PRC_barrel-like_sf"/>
</dbReference>
<dbReference type="InterPro" id="IPR011961">
    <property type="entry name" value="RimM"/>
</dbReference>
<dbReference type="InterPro" id="IPR002676">
    <property type="entry name" value="RimM_N"/>
</dbReference>
<dbReference type="InterPro" id="IPR036976">
    <property type="entry name" value="RimM_N_sf"/>
</dbReference>
<dbReference type="InterPro" id="IPR009000">
    <property type="entry name" value="Transl_B-barrel_sf"/>
</dbReference>
<dbReference type="NCBIfam" id="TIGR02273">
    <property type="entry name" value="16S_RimM"/>
    <property type="match status" value="1"/>
</dbReference>
<dbReference type="PANTHER" id="PTHR33692">
    <property type="entry name" value="RIBOSOME MATURATION FACTOR RIMM"/>
    <property type="match status" value="1"/>
</dbReference>
<dbReference type="PANTHER" id="PTHR33692:SF1">
    <property type="entry name" value="RIBOSOME MATURATION FACTOR RIMM"/>
    <property type="match status" value="1"/>
</dbReference>
<dbReference type="Pfam" id="PF05239">
    <property type="entry name" value="PRC"/>
    <property type="match status" value="1"/>
</dbReference>
<dbReference type="Pfam" id="PF01782">
    <property type="entry name" value="RimM"/>
    <property type="match status" value="1"/>
</dbReference>
<dbReference type="SUPFAM" id="SSF50346">
    <property type="entry name" value="PRC-barrel domain"/>
    <property type="match status" value="1"/>
</dbReference>
<dbReference type="SUPFAM" id="SSF50447">
    <property type="entry name" value="Translation proteins"/>
    <property type="match status" value="1"/>
</dbReference>
<sequence>MTKWFNVGKIVNTHGVKGEIRVVSRTDFPEERYKVGNTLYISNEKGGEPFPVKITSHRQHKTFDLLTFEGYGNVNEVEQFKGSLLKVPEDQLGELAEGEYYYHEIIGCNVVTEEGEALGTIKEVLSPGANDVWVIKRPKGQDLLIPYIDDVVLQVNIENKLVTIHVTEGLL</sequence>
<evidence type="ECO:0000255" key="1">
    <source>
        <dbReference type="HAMAP-Rule" id="MF_00014"/>
    </source>
</evidence>
<protein>
    <recommendedName>
        <fullName evidence="1">Ribosome maturation factor RimM</fullName>
    </recommendedName>
</protein>
<comment type="function">
    <text evidence="1">An accessory protein needed during the final step in the assembly of 30S ribosomal subunit, possibly for assembly of the head region. Essential for efficient processing of 16S rRNA. May be needed both before and after RbfA during the maturation of 16S rRNA. It has affinity for free ribosomal 30S subunits but not for 70S ribosomes.</text>
</comment>
<comment type="subunit">
    <text evidence="1">Binds ribosomal protein uS19.</text>
</comment>
<comment type="subcellular location">
    <subcellularLocation>
        <location evidence="1">Cytoplasm</location>
    </subcellularLocation>
</comment>
<comment type="domain">
    <text evidence="1">The PRC barrel domain binds ribosomal protein uS19.</text>
</comment>
<comment type="similarity">
    <text evidence="1">Belongs to the RimM family.</text>
</comment>
<name>RIMM_BACAA</name>
<reference key="1">
    <citation type="submission" date="2009-04" db="EMBL/GenBank/DDBJ databases">
        <title>Genome sequence of Bacillus anthracis A0248.</title>
        <authorList>
            <person name="Dodson R.J."/>
            <person name="Munk A.C."/>
            <person name="Bruce D."/>
            <person name="Detter C."/>
            <person name="Tapia R."/>
            <person name="Sutton G."/>
            <person name="Sims D."/>
            <person name="Brettin T."/>
        </authorList>
    </citation>
    <scope>NUCLEOTIDE SEQUENCE [LARGE SCALE GENOMIC DNA]</scope>
    <source>
        <strain>A0248</strain>
    </source>
</reference>
<feature type="chain" id="PRO_1000116559" description="Ribosome maturation factor RimM">
    <location>
        <begin position="1"/>
        <end position="171"/>
    </location>
</feature>
<feature type="domain" description="PRC barrel" evidence="1">
    <location>
        <begin position="96"/>
        <end position="170"/>
    </location>
</feature>
<accession>C3P5P3</accession>